<sequence length="448" mass="49481">MAKHRYLPMTEQDEKEMLEVIGVKSIDDLFQDIPEKIRFKRDYDLKPAKSEPALLRELSKLASKNANTSEYASFLGAGVYSHYIPTVVDHVISRSEFYTAYTPYQPEISQGELQAIFEFQTMIAELTGMDLANSSMYDGGTALAEAAMLASGHTKRKKILISGAVHPESINVLKTYATGQHIEVEVIPEVDGKTDIDVLKKALSDDIAGFVVQYPNFYGQVEPLAELEKLVHENNSLLLVSSNPLSLGLLTPPGEFGADIVVGDSQVFGIPESFGGPHCGFFAVTNKLMRKVPGRLVGETVDENGKRGYVLTLQAREQHIRRDKATSNICSNQALNALASSVAMATLGKTGLVEMAKQNLDKSHYAKQKFRENGFEVLFSDGFFNEFVVKLSKPIKEVNESLLDEGIIGGYDLGFYDAKYEQHMLVAVTEMRTKEEIDAFVASLEGVK</sequence>
<reference key="1">
    <citation type="journal article" date="2001" name="Science">
        <title>Comparative genomics of Listeria species.</title>
        <authorList>
            <person name="Glaser P."/>
            <person name="Frangeul L."/>
            <person name="Buchrieser C."/>
            <person name="Rusniok C."/>
            <person name="Amend A."/>
            <person name="Baquero F."/>
            <person name="Berche P."/>
            <person name="Bloecker H."/>
            <person name="Brandt P."/>
            <person name="Chakraborty T."/>
            <person name="Charbit A."/>
            <person name="Chetouani F."/>
            <person name="Couve E."/>
            <person name="de Daruvar A."/>
            <person name="Dehoux P."/>
            <person name="Domann E."/>
            <person name="Dominguez-Bernal G."/>
            <person name="Duchaud E."/>
            <person name="Durant L."/>
            <person name="Dussurget O."/>
            <person name="Entian K.-D."/>
            <person name="Fsihi H."/>
            <person name="Garcia-del Portillo F."/>
            <person name="Garrido P."/>
            <person name="Gautier L."/>
            <person name="Goebel W."/>
            <person name="Gomez-Lopez N."/>
            <person name="Hain T."/>
            <person name="Hauf J."/>
            <person name="Jackson D."/>
            <person name="Jones L.-M."/>
            <person name="Kaerst U."/>
            <person name="Kreft J."/>
            <person name="Kuhn M."/>
            <person name="Kunst F."/>
            <person name="Kurapkat G."/>
            <person name="Madueno E."/>
            <person name="Maitournam A."/>
            <person name="Mata Vicente J."/>
            <person name="Ng E."/>
            <person name="Nedjari H."/>
            <person name="Nordsiek G."/>
            <person name="Novella S."/>
            <person name="de Pablos B."/>
            <person name="Perez-Diaz J.-C."/>
            <person name="Purcell R."/>
            <person name="Remmel B."/>
            <person name="Rose M."/>
            <person name="Schlueter T."/>
            <person name="Simoes N."/>
            <person name="Tierrez A."/>
            <person name="Vazquez-Boland J.-A."/>
            <person name="Voss H."/>
            <person name="Wehland J."/>
            <person name="Cossart P."/>
        </authorList>
    </citation>
    <scope>NUCLEOTIDE SEQUENCE [LARGE SCALE GENOMIC DNA]</scope>
    <source>
        <strain>ATCC BAA-680 / CLIP 11262</strain>
    </source>
</reference>
<protein>
    <recommendedName>
        <fullName evidence="1">Probable glycine dehydrogenase (decarboxylating) subunit 1</fullName>
        <ecNumber evidence="1">1.4.4.2</ecNumber>
    </recommendedName>
    <alternativeName>
        <fullName evidence="1">Glycine cleavage system P-protein subunit 1</fullName>
    </alternativeName>
    <alternativeName>
        <fullName evidence="1">Glycine decarboxylase subunit 1</fullName>
    </alternativeName>
    <alternativeName>
        <fullName evidence="1">Glycine dehydrogenase (aminomethyl-transferring) subunit 1</fullName>
    </alternativeName>
</protein>
<feature type="chain" id="PRO_0000166965" description="Probable glycine dehydrogenase (decarboxylating) subunit 1">
    <location>
        <begin position="1"/>
        <end position="448"/>
    </location>
</feature>
<proteinExistence type="inferred from homology"/>
<comment type="function">
    <text evidence="1">The glycine cleavage system catalyzes the degradation of glycine. The P protein binds the alpha-amino group of glycine through its pyridoxal phosphate cofactor; CO(2) is released and the remaining methylamine moiety is then transferred to the lipoamide cofactor of the H protein.</text>
</comment>
<comment type="catalytic activity">
    <reaction evidence="1">
        <text>N(6)-[(R)-lipoyl]-L-lysyl-[glycine-cleavage complex H protein] + glycine + H(+) = N(6)-[(R)-S(8)-aminomethyldihydrolipoyl]-L-lysyl-[glycine-cleavage complex H protein] + CO2</text>
        <dbReference type="Rhea" id="RHEA:24304"/>
        <dbReference type="Rhea" id="RHEA-COMP:10494"/>
        <dbReference type="Rhea" id="RHEA-COMP:10495"/>
        <dbReference type="ChEBI" id="CHEBI:15378"/>
        <dbReference type="ChEBI" id="CHEBI:16526"/>
        <dbReference type="ChEBI" id="CHEBI:57305"/>
        <dbReference type="ChEBI" id="CHEBI:83099"/>
        <dbReference type="ChEBI" id="CHEBI:83143"/>
        <dbReference type="EC" id="1.4.4.2"/>
    </reaction>
</comment>
<comment type="subunit">
    <text evidence="1">The glycine cleavage system is composed of four proteins: P, T, L and H. In this organism, the P 'protein' is a heterodimer of two subunits.</text>
</comment>
<comment type="similarity">
    <text evidence="1">Belongs to the GcvP family. N-terminal subunit subfamily.</text>
</comment>
<organism>
    <name type="scientific">Listeria innocua serovar 6a (strain ATCC BAA-680 / CLIP 11262)</name>
    <dbReference type="NCBI Taxonomy" id="272626"/>
    <lineage>
        <taxon>Bacteria</taxon>
        <taxon>Bacillati</taxon>
        <taxon>Bacillota</taxon>
        <taxon>Bacilli</taxon>
        <taxon>Bacillales</taxon>
        <taxon>Listeriaceae</taxon>
        <taxon>Listeria</taxon>
    </lineage>
</organism>
<keyword id="KW-0560">Oxidoreductase</keyword>
<evidence type="ECO:0000255" key="1">
    <source>
        <dbReference type="HAMAP-Rule" id="MF_00712"/>
    </source>
</evidence>
<accession>Q92C05</accession>
<dbReference type="EC" id="1.4.4.2" evidence="1"/>
<dbReference type="EMBL" id="AL596168">
    <property type="protein sequence ID" value="CAC96617.1"/>
    <property type="molecule type" value="Genomic_DNA"/>
</dbReference>
<dbReference type="PIR" id="AI1605">
    <property type="entry name" value="AI1605"/>
</dbReference>
<dbReference type="RefSeq" id="WP_003766769.1">
    <property type="nucleotide sequence ID" value="NC_003212.1"/>
</dbReference>
<dbReference type="SMR" id="Q92C05"/>
<dbReference type="STRING" id="272626.gene:17565717"/>
<dbReference type="GeneID" id="93234766"/>
<dbReference type="KEGG" id="lin:lin1386"/>
<dbReference type="eggNOG" id="COG0403">
    <property type="taxonomic scope" value="Bacteria"/>
</dbReference>
<dbReference type="HOGENOM" id="CLU_004620_0_2_9"/>
<dbReference type="OrthoDB" id="9771867at2"/>
<dbReference type="Proteomes" id="UP000002513">
    <property type="component" value="Chromosome"/>
</dbReference>
<dbReference type="GO" id="GO:0004375">
    <property type="term" value="F:glycine dehydrogenase (decarboxylating) activity"/>
    <property type="evidence" value="ECO:0007669"/>
    <property type="project" value="UniProtKB-EC"/>
</dbReference>
<dbReference type="GO" id="GO:0019464">
    <property type="term" value="P:glycine decarboxylation via glycine cleavage system"/>
    <property type="evidence" value="ECO:0007669"/>
    <property type="project" value="UniProtKB-UniRule"/>
</dbReference>
<dbReference type="GO" id="GO:0009116">
    <property type="term" value="P:nucleoside metabolic process"/>
    <property type="evidence" value="ECO:0007669"/>
    <property type="project" value="InterPro"/>
</dbReference>
<dbReference type="CDD" id="cd00613">
    <property type="entry name" value="GDC-P"/>
    <property type="match status" value="1"/>
</dbReference>
<dbReference type="FunFam" id="3.40.640.10:FF:000113">
    <property type="entry name" value="Probable glycine dehydrogenase (decarboxylating) subunit 1"/>
    <property type="match status" value="1"/>
</dbReference>
<dbReference type="FunFam" id="3.90.1150.10:FF:000116">
    <property type="entry name" value="Probable glycine dehydrogenase (decarboxylating) subunit 1"/>
    <property type="match status" value="1"/>
</dbReference>
<dbReference type="Gene3D" id="3.90.1150.10">
    <property type="entry name" value="Aspartate Aminotransferase, domain 1"/>
    <property type="match status" value="1"/>
</dbReference>
<dbReference type="Gene3D" id="3.40.640.10">
    <property type="entry name" value="Type I PLP-dependent aspartate aminotransferase-like (Major domain)"/>
    <property type="match status" value="1"/>
</dbReference>
<dbReference type="HAMAP" id="MF_00712">
    <property type="entry name" value="GcvPA"/>
    <property type="match status" value="1"/>
</dbReference>
<dbReference type="InterPro" id="IPR023010">
    <property type="entry name" value="GcvPA"/>
</dbReference>
<dbReference type="InterPro" id="IPR049315">
    <property type="entry name" value="GDC-P_N"/>
</dbReference>
<dbReference type="InterPro" id="IPR020581">
    <property type="entry name" value="GDC_P"/>
</dbReference>
<dbReference type="InterPro" id="IPR015424">
    <property type="entry name" value="PyrdxlP-dep_Trfase"/>
</dbReference>
<dbReference type="InterPro" id="IPR015421">
    <property type="entry name" value="PyrdxlP-dep_Trfase_major"/>
</dbReference>
<dbReference type="InterPro" id="IPR015422">
    <property type="entry name" value="PyrdxlP-dep_Trfase_small"/>
</dbReference>
<dbReference type="NCBIfam" id="NF001696">
    <property type="entry name" value="PRK00451.1"/>
    <property type="match status" value="1"/>
</dbReference>
<dbReference type="PANTHER" id="PTHR42806">
    <property type="entry name" value="GLYCINE CLEAVAGE SYSTEM P-PROTEIN"/>
    <property type="match status" value="1"/>
</dbReference>
<dbReference type="PANTHER" id="PTHR42806:SF1">
    <property type="entry name" value="GLYCINE DEHYDROGENASE (DECARBOXYLATING)"/>
    <property type="match status" value="1"/>
</dbReference>
<dbReference type="Pfam" id="PF02347">
    <property type="entry name" value="GDC-P"/>
    <property type="match status" value="1"/>
</dbReference>
<dbReference type="PIRSF" id="PIRSF006815">
    <property type="entry name" value="GcvPA"/>
    <property type="match status" value="1"/>
</dbReference>
<dbReference type="SUPFAM" id="SSF53383">
    <property type="entry name" value="PLP-dependent transferases"/>
    <property type="match status" value="1"/>
</dbReference>
<gene>
    <name evidence="1" type="primary">gcvPA</name>
    <name type="ordered locus">lin1386</name>
</gene>
<name>GCSPA_LISIN</name>